<gene>
    <name evidence="1" type="primary">hutU</name>
    <name type="ordered locus">SAV2331</name>
</gene>
<keyword id="KW-0963">Cytoplasm</keyword>
<keyword id="KW-0369">Histidine metabolism</keyword>
<keyword id="KW-0456">Lyase</keyword>
<keyword id="KW-0520">NAD</keyword>
<name>HUTU_STAAM</name>
<proteinExistence type="inferred from homology"/>
<reference key="1">
    <citation type="journal article" date="2001" name="Lancet">
        <title>Whole genome sequencing of meticillin-resistant Staphylococcus aureus.</title>
        <authorList>
            <person name="Kuroda M."/>
            <person name="Ohta T."/>
            <person name="Uchiyama I."/>
            <person name="Baba T."/>
            <person name="Yuzawa H."/>
            <person name="Kobayashi I."/>
            <person name="Cui L."/>
            <person name="Oguchi A."/>
            <person name="Aoki K."/>
            <person name="Nagai Y."/>
            <person name="Lian J.-Q."/>
            <person name="Ito T."/>
            <person name="Kanamori M."/>
            <person name="Matsumaru H."/>
            <person name="Maruyama A."/>
            <person name="Murakami H."/>
            <person name="Hosoyama A."/>
            <person name="Mizutani-Ui Y."/>
            <person name="Takahashi N.K."/>
            <person name="Sawano T."/>
            <person name="Inoue R."/>
            <person name="Kaito C."/>
            <person name="Sekimizu K."/>
            <person name="Hirakawa H."/>
            <person name="Kuhara S."/>
            <person name="Goto S."/>
            <person name="Yabuzaki J."/>
            <person name="Kanehisa M."/>
            <person name="Yamashita A."/>
            <person name="Oshima K."/>
            <person name="Furuya K."/>
            <person name="Yoshino C."/>
            <person name="Shiba T."/>
            <person name="Hattori M."/>
            <person name="Ogasawara N."/>
            <person name="Hayashi H."/>
            <person name="Hiramatsu K."/>
        </authorList>
    </citation>
    <scope>NUCLEOTIDE SEQUENCE [LARGE SCALE GENOMIC DNA]</scope>
    <source>
        <strain>Mu50 / ATCC 700699</strain>
    </source>
</reference>
<protein>
    <recommendedName>
        <fullName evidence="1">Urocanate hydratase</fullName>
        <shortName evidence="1">Urocanase</shortName>
        <ecNumber evidence="1">4.2.1.49</ecNumber>
    </recommendedName>
    <alternativeName>
        <fullName evidence="1">Imidazolonepropionate hydrolase</fullName>
    </alternativeName>
</protein>
<comment type="function">
    <text evidence="1">Catalyzes the conversion of urocanate to 4-imidazolone-5-propionate.</text>
</comment>
<comment type="catalytic activity">
    <reaction evidence="1">
        <text>4-imidazolone-5-propanoate = trans-urocanate + H2O</text>
        <dbReference type="Rhea" id="RHEA:13101"/>
        <dbReference type="ChEBI" id="CHEBI:15377"/>
        <dbReference type="ChEBI" id="CHEBI:17771"/>
        <dbReference type="ChEBI" id="CHEBI:77893"/>
        <dbReference type="EC" id="4.2.1.49"/>
    </reaction>
</comment>
<comment type="cofactor">
    <cofactor evidence="1">
        <name>NAD(+)</name>
        <dbReference type="ChEBI" id="CHEBI:57540"/>
    </cofactor>
    <text evidence="1">Binds 1 NAD(+) per subunit.</text>
</comment>
<comment type="pathway">
    <text evidence="1">Amino-acid degradation; L-histidine degradation into L-glutamate; N-formimidoyl-L-glutamate from L-histidine: step 2/3.</text>
</comment>
<comment type="subcellular location">
    <subcellularLocation>
        <location evidence="1">Cytoplasm</location>
    </subcellularLocation>
</comment>
<comment type="similarity">
    <text evidence="1">Belongs to the urocanase family.</text>
</comment>
<evidence type="ECO:0000255" key="1">
    <source>
        <dbReference type="HAMAP-Rule" id="MF_00577"/>
    </source>
</evidence>
<sequence length="553" mass="60664">MRKIQAKKGLSIECKGWEQEAVLRMLYNNLDPEVAERPEDLVVYGGIGKAARNWEAFEAIEKTLRELESDETMLVQSGKPVAVFKTHEEAPRVLISNSVLVPEWANWDHFNELDKKGLIMYGQMTAGSWIYIGSQGIVQGTYETFAELGNQHFNGDLAGTVTLTAGLGGMGGAQPLAITMNHGVAICVDVDETRVDKRIDTKYCDVKTADLDEALKLAEEAKERGEGLSIGLVGNAVDIHQAILEKGFKIDIITDQTSAHDPLNGYVPQGYSVEEAKVLREKDPKKYVELSQASMAKHVELMLEFQKRGAVAFDYGNNIRQVAFNNGVKNAFDFPGFVPAYIRPLFCEGKGQFRFAALSGDPKDIERADEEMRKLFPENEKLLRWLDLAEEKISYQGLPSRIAWLGYGERAKMGLALNRLVRDGEISAPIVIGRDHLDAGSVASPNRETESMKDGSDAVGDWAVLNALINTAAGGSWISFHHGGGVGMGYSLHAGMVVVADGSERAERRLERVLTTDPGMGVARHVDAGYDIAIQTAKEKGIHIPMIDKAGDK</sequence>
<feature type="chain" id="PRO_0000207354" description="Urocanate hydratase">
    <location>
        <begin position="1"/>
        <end position="553"/>
    </location>
</feature>
<feature type="binding site" evidence="1">
    <location>
        <begin position="45"/>
        <end position="46"/>
    </location>
    <ligand>
        <name>NAD(+)</name>
        <dbReference type="ChEBI" id="CHEBI:57540"/>
    </ligand>
</feature>
<feature type="binding site" evidence="1">
    <location>
        <position position="123"/>
    </location>
    <ligand>
        <name>NAD(+)</name>
        <dbReference type="ChEBI" id="CHEBI:57540"/>
    </ligand>
</feature>
<feature type="binding site" evidence="1">
    <location>
        <begin position="169"/>
        <end position="171"/>
    </location>
    <ligand>
        <name>NAD(+)</name>
        <dbReference type="ChEBI" id="CHEBI:57540"/>
    </ligand>
</feature>
<feature type="binding site" evidence="1">
    <location>
        <position position="189"/>
    </location>
    <ligand>
        <name>NAD(+)</name>
        <dbReference type="ChEBI" id="CHEBI:57540"/>
    </ligand>
</feature>
<feature type="binding site" evidence="1">
    <location>
        <position position="194"/>
    </location>
    <ligand>
        <name>NAD(+)</name>
        <dbReference type="ChEBI" id="CHEBI:57540"/>
    </ligand>
</feature>
<feature type="binding site" evidence="1">
    <location>
        <begin position="235"/>
        <end position="236"/>
    </location>
    <ligand>
        <name>NAD(+)</name>
        <dbReference type="ChEBI" id="CHEBI:57540"/>
    </ligand>
</feature>
<feature type="binding site" evidence="1">
    <location>
        <begin position="256"/>
        <end position="260"/>
    </location>
    <ligand>
        <name>NAD(+)</name>
        <dbReference type="ChEBI" id="CHEBI:57540"/>
    </ligand>
</feature>
<feature type="binding site" evidence="1">
    <location>
        <begin position="266"/>
        <end position="267"/>
    </location>
    <ligand>
        <name>NAD(+)</name>
        <dbReference type="ChEBI" id="CHEBI:57540"/>
    </ligand>
</feature>
<feature type="binding site" evidence="1">
    <location>
        <position position="315"/>
    </location>
    <ligand>
        <name>NAD(+)</name>
        <dbReference type="ChEBI" id="CHEBI:57540"/>
    </ligand>
</feature>
<feature type="binding site" evidence="1">
    <location>
        <position position="485"/>
    </location>
    <ligand>
        <name>NAD(+)</name>
        <dbReference type="ChEBI" id="CHEBI:57540"/>
    </ligand>
</feature>
<organism>
    <name type="scientific">Staphylococcus aureus (strain Mu50 / ATCC 700699)</name>
    <dbReference type="NCBI Taxonomy" id="158878"/>
    <lineage>
        <taxon>Bacteria</taxon>
        <taxon>Bacillati</taxon>
        <taxon>Bacillota</taxon>
        <taxon>Bacilli</taxon>
        <taxon>Bacillales</taxon>
        <taxon>Staphylococcaceae</taxon>
        <taxon>Staphylococcus</taxon>
    </lineage>
</organism>
<dbReference type="EC" id="4.2.1.49" evidence="1"/>
<dbReference type="EMBL" id="BA000017">
    <property type="protein sequence ID" value="BAB58493.1"/>
    <property type="molecule type" value="Genomic_DNA"/>
</dbReference>
<dbReference type="RefSeq" id="WP_001226826.1">
    <property type="nucleotide sequence ID" value="NC_002758.2"/>
</dbReference>
<dbReference type="SMR" id="Q931G1"/>
<dbReference type="KEGG" id="sav:SAV2331"/>
<dbReference type="HOGENOM" id="CLU_018868_0_1_9"/>
<dbReference type="PhylomeDB" id="Q931G1"/>
<dbReference type="UniPathway" id="UPA00379">
    <property type="reaction ID" value="UER00550"/>
</dbReference>
<dbReference type="Proteomes" id="UP000002481">
    <property type="component" value="Chromosome"/>
</dbReference>
<dbReference type="GO" id="GO:0005737">
    <property type="term" value="C:cytoplasm"/>
    <property type="evidence" value="ECO:0007669"/>
    <property type="project" value="UniProtKB-SubCell"/>
</dbReference>
<dbReference type="GO" id="GO:0016153">
    <property type="term" value="F:urocanate hydratase activity"/>
    <property type="evidence" value="ECO:0007669"/>
    <property type="project" value="UniProtKB-UniRule"/>
</dbReference>
<dbReference type="GO" id="GO:0019556">
    <property type="term" value="P:L-histidine catabolic process to glutamate and formamide"/>
    <property type="evidence" value="ECO:0007669"/>
    <property type="project" value="UniProtKB-UniPathway"/>
</dbReference>
<dbReference type="GO" id="GO:0019557">
    <property type="term" value="P:L-histidine catabolic process to glutamate and formate"/>
    <property type="evidence" value="ECO:0007669"/>
    <property type="project" value="UniProtKB-UniPathway"/>
</dbReference>
<dbReference type="FunFam" id="3.40.50.10730:FF:000001">
    <property type="entry name" value="Urocanate hydratase"/>
    <property type="match status" value="1"/>
</dbReference>
<dbReference type="Gene3D" id="3.40.50.10730">
    <property type="entry name" value="Urocanase like domains"/>
    <property type="match status" value="1"/>
</dbReference>
<dbReference type="Gene3D" id="3.40.1770.10">
    <property type="entry name" value="Urocanase superfamily"/>
    <property type="match status" value="1"/>
</dbReference>
<dbReference type="HAMAP" id="MF_00577">
    <property type="entry name" value="HutU"/>
    <property type="match status" value="1"/>
</dbReference>
<dbReference type="InterPro" id="IPR055351">
    <property type="entry name" value="Urocanase"/>
</dbReference>
<dbReference type="InterPro" id="IPR023637">
    <property type="entry name" value="Urocanase-like"/>
</dbReference>
<dbReference type="InterPro" id="IPR035401">
    <property type="entry name" value="Urocanase_C"/>
</dbReference>
<dbReference type="InterPro" id="IPR038364">
    <property type="entry name" value="Urocanase_central_sf"/>
</dbReference>
<dbReference type="InterPro" id="IPR023636">
    <property type="entry name" value="Urocanase_CS"/>
</dbReference>
<dbReference type="InterPro" id="IPR035400">
    <property type="entry name" value="Urocanase_N"/>
</dbReference>
<dbReference type="InterPro" id="IPR035085">
    <property type="entry name" value="Urocanase_Rossmann-like"/>
</dbReference>
<dbReference type="InterPro" id="IPR036190">
    <property type="entry name" value="Urocanase_sf"/>
</dbReference>
<dbReference type="NCBIfam" id="TIGR01228">
    <property type="entry name" value="hutU"/>
    <property type="match status" value="1"/>
</dbReference>
<dbReference type="NCBIfam" id="NF003820">
    <property type="entry name" value="PRK05414.1"/>
    <property type="match status" value="1"/>
</dbReference>
<dbReference type="PANTHER" id="PTHR12216">
    <property type="entry name" value="UROCANATE HYDRATASE"/>
    <property type="match status" value="1"/>
</dbReference>
<dbReference type="PANTHER" id="PTHR12216:SF4">
    <property type="entry name" value="UROCANATE HYDRATASE"/>
    <property type="match status" value="1"/>
</dbReference>
<dbReference type="Pfam" id="PF01175">
    <property type="entry name" value="Urocanase"/>
    <property type="match status" value="1"/>
</dbReference>
<dbReference type="Pfam" id="PF17392">
    <property type="entry name" value="Urocanase_C"/>
    <property type="match status" value="1"/>
</dbReference>
<dbReference type="Pfam" id="PF17391">
    <property type="entry name" value="Urocanase_N"/>
    <property type="match status" value="1"/>
</dbReference>
<dbReference type="PIRSF" id="PIRSF001423">
    <property type="entry name" value="Urocanate_hydrat"/>
    <property type="match status" value="1"/>
</dbReference>
<dbReference type="SUPFAM" id="SSF111326">
    <property type="entry name" value="Urocanase"/>
    <property type="match status" value="1"/>
</dbReference>
<dbReference type="PROSITE" id="PS01233">
    <property type="entry name" value="UROCANASE"/>
    <property type="match status" value="1"/>
</dbReference>
<accession>Q931G1</accession>